<comment type="subcellular location">
    <subcellularLocation>
        <location evidence="2">Secreted</location>
    </subcellularLocation>
</comment>
<comment type="tissue specificity">
    <text evidence="6">Expressed by the venom duct.</text>
</comment>
<comment type="domain">
    <text evidence="5">The cysteine framework is III (CC-C-C-CC). Classified in the M-1 branch, since 1 residue stands between the fourth and the fifth cysteine residues.</text>
</comment>
<comment type="miscellaneous">
    <text evidence="5">The mature sequence of Reg3.4 described in Franco et al., 2017 corresponds to the mature sequence of conotoxin reg3l (AC P0DQO8).</text>
</comment>
<comment type="similarity">
    <text evidence="5">Belongs to the conotoxin M superfamily.</text>
</comment>
<keyword id="KW-0165">Cleavage on pair of basic residues</keyword>
<keyword id="KW-0903">Direct protein sequencing</keyword>
<keyword id="KW-1015">Disulfide bond</keyword>
<keyword id="KW-0964">Secreted</keyword>
<keyword id="KW-0800">Toxin</keyword>
<feature type="propeptide" id="PRO_0000444769" evidence="5">
    <location>
        <begin position="1" status="less than"/>
        <end position="34"/>
    </location>
</feature>
<feature type="peptide" id="PRO_0000444770" description="Reg12l" evidence="2">
    <location>
        <begin position="35"/>
        <end position="53"/>
    </location>
</feature>
<feature type="disulfide bond" evidence="1">
    <location>
        <begin position="36"/>
        <end position="50"/>
    </location>
</feature>
<feature type="disulfide bond" evidence="1">
    <location>
        <begin position="37"/>
        <end position="48"/>
    </location>
</feature>
<feature type="disulfide bond" evidence="1">
    <location>
        <begin position="42"/>
        <end position="51"/>
    </location>
</feature>
<feature type="non-terminal residue" evidence="7">
    <location>
        <position position="1"/>
    </location>
</feature>
<accession>A0A2I6EDL5</accession>
<proteinExistence type="evidence at protein level"/>
<organism>
    <name type="scientific">Conus regius</name>
    <name type="common">Crown cone</name>
    <dbReference type="NCBI Taxonomy" id="101314"/>
    <lineage>
        <taxon>Eukaryota</taxon>
        <taxon>Metazoa</taxon>
        <taxon>Spiralia</taxon>
        <taxon>Lophotrochozoa</taxon>
        <taxon>Mollusca</taxon>
        <taxon>Gastropoda</taxon>
        <taxon>Caenogastropoda</taxon>
        <taxon>Neogastropoda</taxon>
        <taxon>Conoidea</taxon>
        <taxon>Conidae</taxon>
        <taxon>Conus</taxon>
        <taxon>Stephanoconus</taxon>
    </lineage>
</organism>
<reference key="1">
    <citation type="journal article" date="2017" name="FEBS J.">
        <title>Structural plasticity of Mini-M conotoxins: expression of all mini-M subtypes by Conus regius.</title>
        <authorList>
            <person name="Franco A."/>
            <person name="Dovell S."/>
            <person name="Moller C."/>
            <person name="Grandal M."/>
            <person name="Clark E."/>
            <person name="Mari F."/>
        </authorList>
    </citation>
    <scope>NUCLEOTIDE SEQUENCE [MRNA]</scope>
    <source>
        <tissue>Venom duct</tissue>
    </source>
</reference>
<reference key="2">
    <citation type="journal article" date="2006" name="Prog. Mol. Subcell. Biol.">
        <title>Hyperhydroxylation: a new strategy for neuronal targeting by venomous marine molluscs.</title>
        <authorList>
            <person name="Franco A."/>
            <person name="Pisarewicz K."/>
            <person name="Moller C."/>
            <person name="Mora D."/>
            <person name="Fields G.B."/>
            <person name="Mari F."/>
        </authorList>
    </citation>
    <scope>PROTEIN SEQUENCE OF 35-53</scope>
    <scope>SUBCELLULAR LOCATION</scope>
    <source>
        <tissue>Venom</tissue>
    </source>
</reference>
<evidence type="ECO:0000250" key="1">
    <source>
        <dbReference type="UniProtKB" id="Q5EHP3"/>
    </source>
</evidence>
<evidence type="ECO:0000269" key="2">
    <source>
    </source>
</evidence>
<evidence type="ECO:0000303" key="3">
    <source>
    </source>
</evidence>
<evidence type="ECO:0000303" key="4">
    <source>
    </source>
</evidence>
<evidence type="ECO:0000305" key="5"/>
<evidence type="ECO:0000305" key="6">
    <source>
    </source>
</evidence>
<evidence type="ECO:0000305" key="7">
    <source>
    </source>
</evidence>
<evidence type="ECO:0000312" key="8">
    <source>
        <dbReference type="EMBL" id="AUJ88062.1"/>
    </source>
</evidence>
<sequence>RVLFRSGDQPADQPAERMQDISPEQNPLFHPDKRRCCPMPGCFAGPFCPCCPP</sequence>
<name>CMCL_CONRE</name>
<dbReference type="EMBL" id="MF588938">
    <property type="protein sequence ID" value="AUJ88062.1"/>
    <property type="molecule type" value="mRNA"/>
</dbReference>
<dbReference type="SMR" id="A0A2I6EDL5"/>
<dbReference type="GO" id="GO:0005576">
    <property type="term" value="C:extracellular region"/>
    <property type="evidence" value="ECO:0007669"/>
    <property type="project" value="UniProtKB-SubCell"/>
</dbReference>
<dbReference type="GO" id="GO:0090729">
    <property type="term" value="F:toxin activity"/>
    <property type="evidence" value="ECO:0007669"/>
    <property type="project" value="UniProtKB-KW"/>
</dbReference>
<protein>
    <recommendedName>
        <fullName evidence="3">Reg12l</fullName>
    </recommendedName>
    <alternativeName>
        <fullName evidence="4">Reg3.4</fullName>
        <shortName evidence="8">Rg3.4</shortName>
    </alternativeName>
</protein>